<accession>A1AHQ2</accession>
<organism>
    <name type="scientific">Escherichia coli O1:K1 / APEC</name>
    <dbReference type="NCBI Taxonomy" id="405955"/>
    <lineage>
        <taxon>Bacteria</taxon>
        <taxon>Pseudomonadati</taxon>
        <taxon>Pseudomonadota</taxon>
        <taxon>Gammaproteobacteria</taxon>
        <taxon>Enterobacterales</taxon>
        <taxon>Enterobacteriaceae</taxon>
        <taxon>Escherichia</taxon>
    </lineage>
</organism>
<dbReference type="EMBL" id="CP000468">
    <property type="protein sequence ID" value="ABJ03192.1"/>
    <property type="molecule type" value="Genomic_DNA"/>
</dbReference>
<dbReference type="RefSeq" id="WP_000489817.1">
    <property type="nucleotide sequence ID" value="NZ_CADILS010000011.1"/>
</dbReference>
<dbReference type="SMR" id="A1AHQ2"/>
<dbReference type="KEGG" id="ecv:APECO1_2741"/>
<dbReference type="HOGENOM" id="CLU_032473_2_1_6"/>
<dbReference type="Proteomes" id="UP000008216">
    <property type="component" value="Chromosome"/>
</dbReference>
<dbReference type="GO" id="GO:0009279">
    <property type="term" value="C:cell outer membrane"/>
    <property type="evidence" value="ECO:0007669"/>
    <property type="project" value="UniProtKB-SubCell"/>
</dbReference>
<dbReference type="GO" id="GO:0046930">
    <property type="term" value="C:pore complex"/>
    <property type="evidence" value="ECO:0007669"/>
    <property type="project" value="UniProtKB-KW"/>
</dbReference>
<dbReference type="GO" id="GO:0015144">
    <property type="term" value="F:carbohydrate transmembrane transporter activity"/>
    <property type="evidence" value="ECO:0007669"/>
    <property type="project" value="TreeGrafter"/>
</dbReference>
<dbReference type="GO" id="GO:0015288">
    <property type="term" value="F:porin activity"/>
    <property type="evidence" value="ECO:0007669"/>
    <property type="project" value="UniProtKB-KW"/>
</dbReference>
<dbReference type="GO" id="GO:0006811">
    <property type="term" value="P:monoatomic ion transport"/>
    <property type="evidence" value="ECO:0007669"/>
    <property type="project" value="UniProtKB-KW"/>
</dbReference>
<dbReference type="GO" id="GO:0015774">
    <property type="term" value="P:polysaccharide transport"/>
    <property type="evidence" value="ECO:0007669"/>
    <property type="project" value="TreeGrafter"/>
</dbReference>
<dbReference type="CDD" id="cd01346">
    <property type="entry name" value="Maltoporin-like"/>
    <property type="match status" value="1"/>
</dbReference>
<dbReference type="FunFam" id="2.40.170.10:FF:000002">
    <property type="entry name" value="Cryptic outer membrane porin BglH"/>
    <property type="match status" value="1"/>
</dbReference>
<dbReference type="Gene3D" id="2.40.170.10">
    <property type="entry name" value="Porin, LamB type"/>
    <property type="match status" value="1"/>
</dbReference>
<dbReference type="InterPro" id="IPR050286">
    <property type="entry name" value="G_neg_Bact_CarbUptk_Porin"/>
</dbReference>
<dbReference type="InterPro" id="IPR021570">
    <property type="entry name" value="LamB-type_porin_N_dom"/>
</dbReference>
<dbReference type="InterPro" id="IPR003192">
    <property type="entry name" value="Porin_LamB"/>
</dbReference>
<dbReference type="InterPro" id="IPR036998">
    <property type="entry name" value="Porin_LamB_sf"/>
</dbReference>
<dbReference type="PANTHER" id="PTHR38762">
    <property type="entry name" value="CRYPTIC OUTER MEMBRANE PORIN BGLH-RELATED"/>
    <property type="match status" value="1"/>
</dbReference>
<dbReference type="PANTHER" id="PTHR38762:SF1">
    <property type="entry name" value="CRYPTIC OUTER MEMBRANE PORIN BGLH-RELATED"/>
    <property type="match status" value="1"/>
</dbReference>
<dbReference type="Pfam" id="PF02264">
    <property type="entry name" value="LamB"/>
    <property type="match status" value="1"/>
</dbReference>
<dbReference type="Pfam" id="PF11471">
    <property type="entry name" value="Sugarporin_N"/>
    <property type="match status" value="1"/>
</dbReference>
<dbReference type="SUPFAM" id="SSF56935">
    <property type="entry name" value="Porins"/>
    <property type="match status" value="1"/>
</dbReference>
<comment type="function">
    <text evidence="2">May be a sugar porin with a broad carbohydrate specificity.</text>
</comment>
<comment type="subcellular location">
    <subcellularLocation>
        <location evidence="2">Cell outer membrane</location>
        <topology evidence="2">Multi-pass membrane protein</topology>
    </subcellularLocation>
</comment>
<comment type="similarity">
    <text evidence="2">Belongs to the porin LamB (TC 1.B.3) family.</text>
</comment>
<name>BGLH_ECOK1</name>
<evidence type="ECO:0000255" key="1"/>
<evidence type="ECO:0000305" key="2"/>
<gene>
    <name type="primary">bglH</name>
    <name type="ordered locus">Ecok1_36980</name>
    <name type="ORF">APECO1_2741</name>
</gene>
<keyword id="KW-0998">Cell outer membrane</keyword>
<keyword id="KW-0406">Ion transport</keyword>
<keyword id="KW-0472">Membrane</keyword>
<keyword id="KW-0626">Porin</keyword>
<keyword id="KW-1185">Reference proteome</keyword>
<keyword id="KW-0732">Signal</keyword>
<keyword id="KW-0812">Transmembrane</keyword>
<keyword id="KW-1134">Transmembrane beta strand</keyword>
<keyword id="KW-0813">Transport</keyword>
<feature type="signal peptide" evidence="1">
    <location>
        <begin position="1"/>
        <end position="25"/>
    </location>
</feature>
<feature type="chain" id="PRO_0000355021" description="Putative outer membrane porin BglH">
    <location>
        <begin position="26"/>
        <end position="538"/>
    </location>
</feature>
<reference key="1">
    <citation type="journal article" date="2007" name="J. Bacteriol.">
        <title>The genome sequence of avian pathogenic Escherichia coli strain O1:K1:H7 shares strong similarities with human extraintestinal pathogenic E. coli genomes.</title>
        <authorList>
            <person name="Johnson T.J."/>
            <person name="Kariyawasam S."/>
            <person name="Wannemuehler Y."/>
            <person name="Mangiamele P."/>
            <person name="Johnson S.J."/>
            <person name="Doetkott C."/>
            <person name="Skyberg J.A."/>
            <person name="Lynne A.M."/>
            <person name="Johnson J.R."/>
            <person name="Nolan L.K."/>
        </authorList>
    </citation>
    <scope>NUCLEOTIDE SEQUENCE [LARGE SCALE GENOMIC DNA]</scope>
</reference>
<sequence length="538" mass="60800">MFRRNIITSAILLMAPLAFSAQSLAESLTVEQRLELLEKALRETQSELKKYKDEEKKKYTPATVNRSVSTNDQGYAANPFPTSRAAKPDAVLVKNEEKNASETGSIYSSMTLKDFSKFVKDEIGFSYNGYYRSGWGTASHGSPKSWAIGSLGRFGNEYSGWFDLQLKQRVYNENGKRVDAIVMMDGNVGQQYSTGWFGDNAGGENFMQFSDMYVTTKGFLPFAPEADFWVGKHGAPKIEIQMLDWKTQRTDAAAGVGLENWKVGPGKIDIALVREDVDDYDRSLQNKQQINTNTIDLRYKDIPLWDKVTLMVSGRYVTANESASEKDNQDNNGYYDWKDTWMFGTSLTQKFDKGGFNEFSFLVANNSIASNFGRYAGASPFTTFNGRYYGYHTGGTAVRLTSQGEAYIGDHFIVANAIVYSFGNDIYSYETGAHSDFESIRAVVRPAYIWDQYNQTGVELGYFTQQNKDANSNKFNESGYKTTLFHTFKVNTSMLTSRPEIRFYATYIKALENELDGFTFEDNKDDQFAVGAQAEIWW</sequence>
<protein>
    <recommendedName>
        <fullName>Putative outer membrane porin BglH</fullName>
    </recommendedName>
</protein>
<proteinExistence type="inferred from homology"/>